<keyword id="KW-0002">3D-structure</keyword>
<keyword id="KW-1003">Cell membrane</keyword>
<keyword id="KW-0413">Isomerase</keyword>
<keyword id="KW-1017">Isopeptide bond</keyword>
<keyword id="KW-0472">Membrane</keyword>
<keyword id="KW-0597">Phosphoprotein</keyword>
<keyword id="KW-1267">Proteomics identification</keyword>
<keyword id="KW-1185">Reference proteome</keyword>
<keyword id="KW-0677">Repeat</keyword>
<keyword id="KW-0697">Rotamase</keyword>
<keyword id="KW-0832">Ubl conjugation</keyword>
<dbReference type="EC" id="5.2.1.8" evidence="4"/>
<dbReference type="EMBL" id="L04288">
    <property type="protein sequence ID" value="AAA35734.2"/>
    <property type="molecule type" value="mRNA"/>
</dbReference>
<dbReference type="EMBL" id="AF184110">
    <property type="protein sequence ID" value="AAD56402.1"/>
    <property type="molecule type" value="Genomic_DNA"/>
</dbReference>
<dbReference type="CCDS" id="CCDS2702.1"/>
<dbReference type="PIR" id="A47328">
    <property type="entry name" value="A47328"/>
</dbReference>
<dbReference type="RefSeq" id="NP_005376.2">
    <property type="nucleotide sequence ID" value="NM_005385.3"/>
</dbReference>
<dbReference type="PDB" id="2HE9">
    <property type="method" value="X-ray"/>
    <property type="resolution" value="2.00 A"/>
    <property type="chains" value="A/B=7-179"/>
</dbReference>
<dbReference type="PDBsum" id="2HE9"/>
<dbReference type="SMR" id="P30414"/>
<dbReference type="BioGRID" id="110885">
    <property type="interactions" value="105"/>
</dbReference>
<dbReference type="FunCoup" id="P30414">
    <property type="interactions" value="3610"/>
</dbReference>
<dbReference type="IntAct" id="P30414">
    <property type="interactions" value="72"/>
</dbReference>
<dbReference type="MINT" id="P30414"/>
<dbReference type="STRING" id="9606.ENSP00000232978"/>
<dbReference type="CarbonylDB" id="P30414"/>
<dbReference type="GlyGen" id="P30414">
    <property type="glycosylation" value="4 sites, 1 O-linked glycan (4 sites)"/>
</dbReference>
<dbReference type="iPTMnet" id="P30414"/>
<dbReference type="PhosphoSitePlus" id="P30414"/>
<dbReference type="BioMuta" id="NKTR"/>
<dbReference type="DMDM" id="8039798"/>
<dbReference type="jPOST" id="P30414"/>
<dbReference type="MassIVE" id="P30414"/>
<dbReference type="PaxDb" id="9606-ENSP00000232978"/>
<dbReference type="PeptideAtlas" id="P30414"/>
<dbReference type="ProteomicsDB" id="54666"/>
<dbReference type="Pumba" id="P30414"/>
<dbReference type="Antibodypedia" id="12363">
    <property type="antibodies" value="95 antibodies from 22 providers"/>
</dbReference>
<dbReference type="DNASU" id="4820"/>
<dbReference type="Ensembl" id="ENST00000232978.13">
    <property type="protein sequence ID" value="ENSP00000232978.8"/>
    <property type="gene ID" value="ENSG00000114857.19"/>
</dbReference>
<dbReference type="GeneID" id="4820"/>
<dbReference type="KEGG" id="hsa:4820"/>
<dbReference type="MANE-Select" id="ENST00000232978.13">
    <property type="protein sequence ID" value="ENSP00000232978.8"/>
    <property type="RefSeq nucleotide sequence ID" value="NM_005385.4"/>
    <property type="RefSeq protein sequence ID" value="NP_005376.2"/>
</dbReference>
<dbReference type="UCSC" id="uc003clo.4">
    <property type="organism name" value="human"/>
</dbReference>
<dbReference type="AGR" id="HGNC:7833"/>
<dbReference type="CTD" id="4820"/>
<dbReference type="DisGeNET" id="4820"/>
<dbReference type="GeneCards" id="NKTR"/>
<dbReference type="HGNC" id="HGNC:7833">
    <property type="gene designation" value="NKTR"/>
</dbReference>
<dbReference type="HPA" id="ENSG00000114857">
    <property type="expression patterns" value="Low tissue specificity"/>
</dbReference>
<dbReference type="MIM" id="161565">
    <property type="type" value="gene"/>
</dbReference>
<dbReference type="neXtProt" id="NX_P30414"/>
<dbReference type="OpenTargets" id="ENSG00000114857"/>
<dbReference type="PharmGKB" id="PA31641"/>
<dbReference type="VEuPathDB" id="HostDB:ENSG00000114857"/>
<dbReference type="eggNOG" id="KOG0546">
    <property type="taxonomic scope" value="Eukaryota"/>
</dbReference>
<dbReference type="GeneTree" id="ENSGT00940000158548"/>
<dbReference type="HOGENOM" id="CLU_004527_0_0_1"/>
<dbReference type="InParanoid" id="P30414"/>
<dbReference type="OMA" id="NAKHTEP"/>
<dbReference type="OrthoDB" id="9909290at2759"/>
<dbReference type="PAN-GO" id="P30414">
    <property type="GO annotations" value="6 GO annotations based on evolutionary models"/>
</dbReference>
<dbReference type="PhylomeDB" id="P30414"/>
<dbReference type="TreeFam" id="TF318563"/>
<dbReference type="PathwayCommons" id="P30414"/>
<dbReference type="SignaLink" id="P30414"/>
<dbReference type="BioGRID-ORCS" id="4820">
    <property type="hits" value="41 hits in 1156 CRISPR screens"/>
</dbReference>
<dbReference type="ChiTaRS" id="NKTR">
    <property type="organism name" value="human"/>
</dbReference>
<dbReference type="EvolutionaryTrace" id="P30414"/>
<dbReference type="GeneWiki" id="NKTR"/>
<dbReference type="GenomeRNAi" id="4820"/>
<dbReference type="Pharos" id="P30414">
    <property type="development level" value="Tbio"/>
</dbReference>
<dbReference type="PRO" id="PR:P30414"/>
<dbReference type="Proteomes" id="UP000005640">
    <property type="component" value="Chromosome 3"/>
</dbReference>
<dbReference type="RNAct" id="P30414">
    <property type="molecule type" value="protein"/>
</dbReference>
<dbReference type="Bgee" id="ENSG00000114857">
    <property type="expression patterns" value="Expressed in pylorus and 211 other cell types or tissues"/>
</dbReference>
<dbReference type="ExpressionAtlas" id="P30414">
    <property type="expression patterns" value="baseline and differential"/>
</dbReference>
<dbReference type="GO" id="GO:0005737">
    <property type="term" value="C:cytoplasm"/>
    <property type="evidence" value="ECO:0000318"/>
    <property type="project" value="GO_Central"/>
</dbReference>
<dbReference type="GO" id="GO:0005634">
    <property type="term" value="C:nucleus"/>
    <property type="evidence" value="ECO:0000318"/>
    <property type="project" value="GO_Central"/>
</dbReference>
<dbReference type="GO" id="GO:0005886">
    <property type="term" value="C:plasma membrane"/>
    <property type="evidence" value="ECO:0007669"/>
    <property type="project" value="UniProtKB-SubCell"/>
</dbReference>
<dbReference type="GO" id="GO:0016018">
    <property type="term" value="F:cyclosporin A binding"/>
    <property type="evidence" value="ECO:0000318"/>
    <property type="project" value="GO_Central"/>
</dbReference>
<dbReference type="GO" id="GO:0003755">
    <property type="term" value="F:peptidyl-prolyl cis-trans isomerase activity"/>
    <property type="evidence" value="ECO:0000314"/>
    <property type="project" value="UniProtKB"/>
</dbReference>
<dbReference type="GO" id="GO:0006457">
    <property type="term" value="P:protein folding"/>
    <property type="evidence" value="ECO:0000318"/>
    <property type="project" value="GO_Central"/>
</dbReference>
<dbReference type="FunFam" id="2.40.100.10:FF:000005">
    <property type="entry name" value="Peptidyl-prolyl cis-trans isomerase G"/>
    <property type="match status" value="1"/>
</dbReference>
<dbReference type="Gene3D" id="2.40.100.10">
    <property type="entry name" value="Cyclophilin-like"/>
    <property type="match status" value="1"/>
</dbReference>
<dbReference type="InterPro" id="IPR029000">
    <property type="entry name" value="Cyclophilin-like_dom_sf"/>
</dbReference>
<dbReference type="InterPro" id="IPR020892">
    <property type="entry name" value="Cyclophilin-type_PPIase_CS"/>
</dbReference>
<dbReference type="InterPro" id="IPR002130">
    <property type="entry name" value="Cyclophilin-type_PPIase_dom"/>
</dbReference>
<dbReference type="PANTHER" id="PTHR11071:SF257">
    <property type="entry name" value="NK-TUMOR RECOGNITION PROTEIN"/>
    <property type="match status" value="1"/>
</dbReference>
<dbReference type="PANTHER" id="PTHR11071">
    <property type="entry name" value="PEPTIDYL-PROLYL CIS-TRANS ISOMERASE"/>
    <property type="match status" value="1"/>
</dbReference>
<dbReference type="Pfam" id="PF00160">
    <property type="entry name" value="Pro_isomerase"/>
    <property type="match status" value="1"/>
</dbReference>
<dbReference type="PRINTS" id="PR00153">
    <property type="entry name" value="CSAPPISMRASE"/>
</dbReference>
<dbReference type="SUPFAM" id="SSF50891">
    <property type="entry name" value="Cyclophilin-like"/>
    <property type="match status" value="1"/>
</dbReference>
<dbReference type="PROSITE" id="PS00170">
    <property type="entry name" value="CSA_PPIASE_1"/>
    <property type="match status" value="1"/>
</dbReference>
<dbReference type="PROSITE" id="PS50072">
    <property type="entry name" value="CSA_PPIASE_2"/>
    <property type="match status" value="1"/>
</dbReference>
<name>NKTR_HUMAN</name>
<sequence length="1462" mass="165677">MGAQDRPQCHFDIEINREPVGRIMFQLFSDICPKTCKNFLCLCSGEKGLGKTTGKKLCYKGSTFHRVVKNFMIQGGDFSEGNGKGGESIYGGYFKDENFILKHDRAFLLSMANRGKHTNGSQFFITTKPAPHLDGVHVVFGLVISGFEVIEQIENLKTDAASRPYADVRVIDCGVLATKSIKDVFEKKRKKPTHSEGSDSSSNSSSSSESSSESELEHERSRRRKHKRRPKVKRSKKRRKEASSSEEPRNKHAMNPKGHSERSDTNEKRSVDSSAKREKPVVRPEEIPPVPENRFLLRRDMPVVTAEPEPKIPDVAPIVSDQKPSVSKSGRKIKGRGTIRYHTPPRSRSCSESDDDDSSETPPHWKEEMQRLRAYRPPSGEKWSKGDKLSDPCSSRWDERSLSQRSRSWSYNGYYSDLSTARHSGHHKKRRKEKKVKHKKKGKKQKHCRRHKQTKKRRILIPSDIESSKSSTRRMKSSCDRERSSRSSSLSSHHSSKRDWSKSDKDVQSSLTHSSRDSYRSKSHSQSYSRGSSRSRTASKSSSHSRSRSKSRSSSKSGHRKRASKSPRKTASQLSENKPVKTEPLRATMAQNENVVVQPVVAENIPVIPLSDSPPPSRWKPGQKPWKPSYERIQEMKAKTTHLLPIQSTYSLANIKETGSSSSYHKREKNSESDQSTYSKYSDRSSESSPRSRSRSSRSRSYSRSYTRSRSLASSHSRSRSPSSRSHSRNKYSDHSQCSRSSSYTSISSDDGRRAKRRLRSSGKKNSVSHKKHSSSSEKTLHSKYVKGRDRSSCVRKYSESRSSLDYSSDSEQSSVQATQSAQEKEKQGQMERTHNKQEKNRGEEKSKSERECPHSKKRTLKENLSDHLRNGSKPKRKNYAGSKWDSESNSERDVTKNSKNDSHPSSDKEEGEATSDSESEVSEIHIKVKPTTKSSTNTSLPDDNGAWKSSKQRTSTSDSEGSCSNSENNRGKPQKHKHGSKENLKREHTKKVKEKLKGKKDKKHKAPKRKQAFHWQPPLEFGEEEEEEIDDKQVTQESKEKKVSENNETIKDNILKTEKSSEEDLSGKHDTVTVSSDLDQFTKDDSKLSISPTALNTEENVACLQNIQHVEESVPNGVEDVLQTDDNMEICTPDRSSPAKVEETSPLGNARLDTPDINIVLKQDMATEHPQAEVVKQESSMSESKVLGEVGKQDSSSASLASAGESTGKKEVAEKSQINLIDKKWKPLQGVGNLAAPNAATSSAVEVKVLTTVPEMKPQGLRIEIKSKNKVRPGSLFDEVRKTARLNRRPRNQESSSDEQTPSRDDDSQSRSPSRSRSKSETKSRHRTRSVSYSHSRSRSRSSTSSYRSRSYSRSRSRGWYSRGRTRSRSSSYRSYKSHRTSSRSRSRSSSYDPHSRSRSYTYDSYYSRSRSRSRSQRSDSYHRGRSYNRRSRSCRSYGSDSESDRSYSHHRSPSESSRYS</sequence>
<organism>
    <name type="scientific">Homo sapiens</name>
    <name type="common">Human</name>
    <dbReference type="NCBI Taxonomy" id="9606"/>
    <lineage>
        <taxon>Eukaryota</taxon>
        <taxon>Metazoa</taxon>
        <taxon>Chordata</taxon>
        <taxon>Craniata</taxon>
        <taxon>Vertebrata</taxon>
        <taxon>Euteleostomi</taxon>
        <taxon>Mammalia</taxon>
        <taxon>Eutheria</taxon>
        <taxon>Euarchontoglires</taxon>
        <taxon>Primates</taxon>
        <taxon>Haplorrhini</taxon>
        <taxon>Catarrhini</taxon>
        <taxon>Hominidae</taxon>
        <taxon>Homo</taxon>
    </lineage>
</organism>
<proteinExistence type="evidence at protein level"/>
<reference key="1">
    <citation type="journal article" date="1993" name="Proc. Natl. Acad. Sci. U.S.A.">
        <title>A cyclophilin-related protein involved in the function of natural killer cells.</title>
        <authorList>
            <person name="Anderson S.K."/>
            <person name="Gallinger S."/>
            <person name="Roder J."/>
            <person name="Frey J."/>
            <person name="Young H.A."/>
            <person name="Ortaldo J.R."/>
        </authorList>
    </citation>
    <scope>NUCLEOTIDE SEQUENCE [MRNA]</scope>
    <scope>FUNCTION</scope>
    <scope>SUBCELLULAR LOCATION</scope>
    <scope>CAUTION</scope>
    <source>
        <tissue>Blood</tissue>
    </source>
</reference>
<reference key="2">
    <citation type="submission" date="1999-09" db="EMBL/GenBank/DDBJ databases">
        <authorList>
            <person name="Anderson S.K."/>
        </authorList>
    </citation>
    <scope>SEQUENCE REVISION</scope>
</reference>
<reference key="3">
    <citation type="submission" date="1999-09" db="EMBL/GenBank/DDBJ databases">
        <title>Structure of the human NKTR gene.</title>
        <authorList>
            <person name="Anderson S.K."/>
        </authorList>
    </citation>
    <scope>NUCLEOTIDE SEQUENCE [GENOMIC DNA]</scope>
</reference>
<reference key="4">
    <citation type="journal article" date="2006" name="Cell">
        <title>Global, in vivo, and site-specific phosphorylation dynamics in signaling networks.</title>
        <authorList>
            <person name="Olsen J.V."/>
            <person name="Blagoev B."/>
            <person name="Gnad F."/>
            <person name="Macek B."/>
            <person name="Kumar C."/>
            <person name="Mortensen P."/>
            <person name="Mann M."/>
        </authorList>
    </citation>
    <scope>PHOSPHORYLATION [LARGE SCALE ANALYSIS] AT SER-379</scope>
    <scope>IDENTIFICATION BY MASS SPECTROMETRY [LARGE SCALE ANALYSIS]</scope>
    <source>
        <tissue>Cervix carcinoma</tissue>
    </source>
</reference>
<reference key="5">
    <citation type="journal article" date="2008" name="Proc. Natl. Acad. Sci. U.S.A.">
        <title>A quantitative atlas of mitotic phosphorylation.</title>
        <authorList>
            <person name="Dephoure N."/>
            <person name="Zhou C."/>
            <person name="Villen J."/>
            <person name="Beausoleil S.A."/>
            <person name="Bakalarski C.E."/>
            <person name="Elledge S.J."/>
            <person name="Gygi S.P."/>
        </authorList>
    </citation>
    <scope>PHOSPHORYLATION [LARGE SCALE ANALYSIS] AT SER-463; SER-887; SER-889 AND SER-891</scope>
    <scope>IDENTIFICATION BY MASS SPECTROMETRY [LARGE SCALE ANALYSIS]</scope>
    <source>
        <tissue>Cervix carcinoma</tissue>
    </source>
</reference>
<reference key="6">
    <citation type="journal article" date="2009" name="Sci. Signal.">
        <title>Quantitative phosphoproteomic analysis of T cell receptor signaling reveals system-wide modulation of protein-protein interactions.</title>
        <authorList>
            <person name="Mayya V."/>
            <person name="Lundgren D.H."/>
            <person name="Hwang S.-I."/>
            <person name="Rezaul K."/>
            <person name="Wu L."/>
            <person name="Eng J.K."/>
            <person name="Rodionov V."/>
            <person name="Han D.K."/>
        </authorList>
    </citation>
    <scope>IDENTIFICATION BY MASS SPECTROMETRY [LARGE SCALE ANALYSIS]</scope>
    <source>
        <tissue>Leukemic T-cell</tissue>
    </source>
</reference>
<reference key="7">
    <citation type="journal article" date="2010" name="Sci. Signal.">
        <title>Quantitative phosphoproteomics reveals widespread full phosphorylation site occupancy during mitosis.</title>
        <authorList>
            <person name="Olsen J.V."/>
            <person name="Vermeulen M."/>
            <person name="Santamaria A."/>
            <person name="Kumar C."/>
            <person name="Miller M.L."/>
            <person name="Jensen L.J."/>
            <person name="Gnad F."/>
            <person name="Cox J."/>
            <person name="Jensen T.S."/>
            <person name="Nigg E.A."/>
            <person name="Brunak S."/>
            <person name="Mann M."/>
        </authorList>
    </citation>
    <scope>PHOSPHORYLATION [LARGE SCALE ANALYSIS] AT SER-463 AND SER-1146</scope>
    <scope>IDENTIFICATION BY MASS SPECTROMETRY [LARGE SCALE ANALYSIS]</scope>
    <source>
        <tissue>Cervix carcinoma</tissue>
    </source>
</reference>
<reference key="8">
    <citation type="journal article" date="2011" name="Sci. Signal.">
        <title>System-wide temporal characterization of the proteome and phosphoproteome of human embryonic stem cell differentiation.</title>
        <authorList>
            <person name="Rigbolt K.T."/>
            <person name="Prokhorova T.A."/>
            <person name="Akimov V."/>
            <person name="Henningsen J."/>
            <person name="Johansen P.T."/>
            <person name="Kratchmarova I."/>
            <person name="Kassem M."/>
            <person name="Mann M."/>
            <person name="Olsen J.V."/>
            <person name="Blagoev B."/>
        </authorList>
    </citation>
    <scope>PHOSPHORYLATION [LARGE SCALE ANALYSIS] AT SER-379; SER-463; SER-1146 AND THR-1155</scope>
    <scope>IDENTIFICATION BY MASS SPECTROMETRY [LARGE SCALE ANALYSIS]</scope>
</reference>
<reference key="9">
    <citation type="journal article" date="2013" name="J. Proteome Res.">
        <title>Toward a comprehensive characterization of a human cancer cell phosphoproteome.</title>
        <authorList>
            <person name="Zhou H."/>
            <person name="Di Palma S."/>
            <person name="Preisinger C."/>
            <person name="Peng M."/>
            <person name="Polat A.N."/>
            <person name="Heck A.J."/>
            <person name="Mohammed S."/>
        </authorList>
    </citation>
    <scope>PHOSPHORYLATION [LARGE SCALE ANALYSIS] AT SER-401; SER-416; SER-463; SER-471; SER-648; SER-866; SER-889; SER-1077; SER-1146; THR-1155 AND SER-1203</scope>
    <scope>IDENTIFICATION BY MASS SPECTROMETRY [LARGE SCALE ANALYSIS]</scope>
    <source>
        <tissue>Cervix carcinoma</tissue>
        <tissue>Erythroleukemia</tissue>
    </source>
</reference>
<reference key="10">
    <citation type="journal article" date="2014" name="J. Proteomics">
        <title>An enzyme assisted RP-RPLC approach for in-depth analysis of human liver phosphoproteome.</title>
        <authorList>
            <person name="Bian Y."/>
            <person name="Song C."/>
            <person name="Cheng K."/>
            <person name="Dong M."/>
            <person name="Wang F."/>
            <person name="Huang J."/>
            <person name="Sun D."/>
            <person name="Wang L."/>
            <person name="Ye M."/>
            <person name="Zou H."/>
        </authorList>
    </citation>
    <scope>PHOSPHORYLATION [LARGE SCALE ANALYSIS] AT THR-1155</scope>
    <scope>IDENTIFICATION BY MASS SPECTROMETRY [LARGE SCALE ANALYSIS]</scope>
    <source>
        <tissue>Liver</tissue>
    </source>
</reference>
<reference key="11">
    <citation type="journal article" date="2014" name="Nat. Struct. Mol. Biol.">
        <title>Uncovering global SUMOylation signaling networks in a site-specific manner.</title>
        <authorList>
            <person name="Hendriks I.A."/>
            <person name="D'Souza R.C."/>
            <person name="Yang B."/>
            <person name="Verlaan-de Vries M."/>
            <person name="Mann M."/>
            <person name="Vertegaal A.C."/>
        </authorList>
    </citation>
    <scope>SUMOYLATION [LARGE SCALE ANALYSIS] AT LYS-323; LYS-581; LYS-1057 AND LYS-1258</scope>
    <scope>IDENTIFICATION BY MASS SPECTROMETRY [LARGE SCALE ANALYSIS]</scope>
</reference>
<reference key="12">
    <citation type="journal article" date="2014" name="Proc. Natl. Acad. Sci. U.S.A.">
        <title>Mapping of SUMO sites and analysis of SUMOylation changes induced by external stimuli.</title>
        <authorList>
            <person name="Impens F."/>
            <person name="Radoshevich L."/>
            <person name="Cossart P."/>
            <person name="Ribet D."/>
        </authorList>
    </citation>
    <scope>SUMOYLATION [LARGE SCALE ANALYSIS] AT LYS-581 AND LYS-1177</scope>
    <scope>IDENTIFICATION BY MASS SPECTROMETRY [LARGE SCALE ANALYSIS]</scope>
</reference>
<reference key="13">
    <citation type="journal article" date="2015" name="Cell Rep.">
        <title>SUMO-2 orchestrates chromatin modifiers in response to DNA damage.</title>
        <authorList>
            <person name="Hendriks I.A."/>
            <person name="Treffers L.W."/>
            <person name="Verlaan-de Vries M."/>
            <person name="Olsen J.V."/>
            <person name="Vertegaal A.C."/>
        </authorList>
    </citation>
    <scope>SUMOYLATION [LARGE SCALE ANALYSIS] AT LYS-323; LYS-1057 AND LYS-1258</scope>
    <scope>IDENTIFICATION BY MASS SPECTROMETRY [LARGE SCALE ANALYSIS]</scope>
</reference>
<reference key="14">
    <citation type="journal article" date="2015" name="Mol. Cell. Proteomics">
        <title>System-wide analysis of SUMOylation dynamics in response to replication stress reveals novel small ubiquitin-like modified target proteins and acceptor lysines relevant for genome stability.</title>
        <authorList>
            <person name="Xiao Z."/>
            <person name="Chang J.G."/>
            <person name="Hendriks I.A."/>
            <person name="Sigurdsson J.O."/>
            <person name="Olsen J.V."/>
            <person name="Vertegaal A.C."/>
        </authorList>
    </citation>
    <scope>SUMOYLATION [LARGE SCALE ANALYSIS] AT LYS-323; LYS-581 AND LYS-666</scope>
    <scope>IDENTIFICATION BY MASS SPECTROMETRY [LARGE SCALE ANALYSIS]</scope>
</reference>
<reference key="15">
    <citation type="journal article" date="2017" name="Nat. Struct. Mol. Biol.">
        <title>Site-specific mapping of the human SUMO proteome reveals co-modification with phosphorylation.</title>
        <authorList>
            <person name="Hendriks I.A."/>
            <person name="Lyon D."/>
            <person name="Young C."/>
            <person name="Jensen L.J."/>
            <person name="Vertegaal A.C."/>
            <person name="Nielsen M.L."/>
        </authorList>
    </citation>
    <scope>SUMOYLATION [LARGE SCALE ANALYSIS] AT LYS-323; LYS-578; LYS-581; LYS-639; LYS-656; LYS-666; LYS-1057; LYS-1163; LYS-1177; LYS-1216; LYS-1225 AND LYS-1258</scope>
    <scope>IDENTIFICATION BY MASS SPECTROMETRY [LARGE SCALE ANALYSIS]</scope>
</reference>
<reference evidence="10" key="16">
    <citation type="journal article" date="2010" name="PLoS Biol.">
        <title>Structural and biochemical characterization of the human cyclophilin family of peptidyl-prolyl isomerases.</title>
        <authorList>
            <person name="Davis T.L."/>
            <person name="Walker J.R."/>
            <person name="Campagna-Slater V."/>
            <person name="Finerty P.J."/>
            <person name="Paramanathan R."/>
            <person name="Bernstein G."/>
            <person name="MacKenzie F."/>
            <person name="Tempel W."/>
            <person name="Ouyang H."/>
            <person name="Lee W.H."/>
            <person name="Eisenmesser E.Z."/>
            <person name="Dhe-Paganon S."/>
        </authorList>
    </citation>
    <scope>X-RAY CRYSTALLOGRAPHY (2.00 ANGSTROMS) OF 7-179</scope>
    <scope>FUNCTION</scope>
    <scope>CATALYTIC ACTIVITY</scope>
    <scope>ACTIVITY REGULATION</scope>
</reference>
<gene>
    <name evidence="9" type="primary">NKTR</name>
</gene>
<feature type="chain" id="PRO_0000064217" description="NK-tumor recognition protein">
    <location>
        <begin position="1"/>
        <end position="1462"/>
    </location>
</feature>
<feature type="domain" description="PPIase cyclophilin-type" evidence="2">
    <location>
        <begin position="10"/>
        <end position="175"/>
    </location>
</feature>
<feature type="region of interest" description="Disordered" evidence="3">
    <location>
        <begin position="187"/>
        <end position="591"/>
    </location>
</feature>
<feature type="region of interest" description="Disordered" evidence="3">
    <location>
        <begin position="607"/>
        <end position="627"/>
    </location>
</feature>
<feature type="region of interest" description="Disordered" evidence="3">
    <location>
        <begin position="658"/>
        <end position="1072"/>
    </location>
</feature>
<feature type="region of interest" description="Disordered" evidence="3">
    <location>
        <begin position="1129"/>
        <end position="1156"/>
    </location>
</feature>
<feature type="region of interest" description="Disordered" evidence="3">
    <location>
        <begin position="1169"/>
        <end position="1215"/>
    </location>
</feature>
<feature type="region of interest" description="Disordered" evidence="3">
    <location>
        <begin position="1251"/>
        <end position="1462"/>
    </location>
</feature>
<feature type="region of interest" description="Arg/Ser tandem repeat-rich">
    <location>
        <begin position="1311"/>
        <end position="1348"/>
    </location>
</feature>
<feature type="compositionally biased region" description="Low complexity" evidence="3">
    <location>
        <begin position="198"/>
        <end position="213"/>
    </location>
</feature>
<feature type="compositionally biased region" description="Basic residues" evidence="3">
    <location>
        <begin position="221"/>
        <end position="240"/>
    </location>
</feature>
<feature type="compositionally biased region" description="Basic and acidic residues" evidence="3">
    <location>
        <begin position="241"/>
        <end position="250"/>
    </location>
</feature>
<feature type="compositionally biased region" description="Basic and acidic residues" evidence="3">
    <location>
        <begin position="258"/>
        <end position="286"/>
    </location>
</feature>
<feature type="compositionally biased region" description="Basic residues" evidence="3">
    <location>
        <begin position="329"/>
        <end position="345"/>
    </location>
</feature>
<feature type="compositionally biased region" description="Basic and acidic residues" evidence="3">
    <location>
        <begin position="382"/>
        <end position="402"/>
    </location>
</feature>
<feature type="compositionally biased region" description="Polar residues" evidence="3">
    <location>
        <begin position="403"/>
        <end position="421"/>
    </location>
</feature>
<feature type="compositionally biased region" description="Basic residues" evidence="3">
    <location>
        <begin position="423"/>
        <end position="459"/>
    </location>
</feature>
<feature type="compositionally biased region" description="Basic and acidic residues" evidence="3">
    <location>
        <begin position="497"/>
        <end position="507"/>
    </location>
</feature>
<feature type="compositionally biased region" description="Low complexity" evidence="3">
    <location>
        <begin position="524"/>
        <end position="542"/>
    </location>
</feature>
<feature type="compositionally biased region" description="Basic residues" evidence="3">
    <location>
        <begin position="543"/>
        <end position="568"/>
    </location>
</feature>
<feature type="compositionally biased region" description="Low complexity" evidence="3">
    <location>
        <begin position="699"/>
        <end position="725"/>
    </location>
</feature>
<feature type="compositionally biased region" description="Low complexity" evidence="3">
    <location>
        <begin position="736"/>
        <end position="749"/>
    </location>
</feature>
<feature type="compositionally biased region" description="Basic residues" evidence="3">
    <location>
        <begin position="754"/>
        <end position="774"/>
    </location>
</feature>
<feature type="compositionally biased region" description="Basic and acidic residues" evidence="3">
    <location>
        <begin position="775"/>
        <end position="800"/>
    </location>
</feature>
<feature type="compositionally biased region" description="Low complexity" evidence="3">
    <location>
        <begin position="801"/>
        <end position="815"/>
    </location>
</feature>
<feature type="compositionally biased region" description="Basic and acidic residues" evidence="3">
    <location>
        <begin position="823"/>
        <end position="870"/>
    </location>
</feature>
<feature type="compositionally biased region" description="Basic and acidic residues" evidence="3">
    <location>
        <begin position="885"/>
        <end position="909"/>
    </location>
</feature>
<feature type="compositionally biased region" description="Acidic residues" evidence="3">
    <location>
        <begin position="910"/>
        <end position="922"/>
    </location>
</feature>
<feature type="compositionally biased region" description="Polar residues" evidence="3">
    <location>
        <begin position="932"/>
        <end position="969"/>
    </location>
</feature>
<feature type="compositionally biased region" description="Basic residues" evidence="3">
    <location>
        <begin position="988"/>
        <end position="1013"/>
    </location>
</feature>
<feature type="compositionally biased region" description="Acidic residues" evidence="3">
    <location>
        <begin position="1022"/>
        <end position="1031"/>
    </location>
</feature>
<feature type="compositionally biased region" description="Basic and acidic residues" evidence="3">
    <location>
        <begin position="1032"/>
        <end position="1072"/>
    </location>
</feature>
<feature type="compositionally biased region" description="Low complexity" evidence="3">
    <location>
        <begin position="1331"/>
        <end position="1351"/>
    </location>
</feature>
<feature type="compositionally biased region" description="Low complexity" evidence="3">
    <location>
        <begin position="1359"/>
        <end position="1376"/>
    </location>
</feature>
<feature type="compositionally biased region" description="Basic residues" evidence="3">
    <location>
        <begin position="1377"/>
        <end position="1388"/>
    </location>
</feature>
<feature type="compositionally biased region" description="Low complexity" evidence="3">
    <location>
        <begin position="1389"/>
        <end position="1410"/>
    </location>
</feature>
<feature type="compositionally biased region" description="Basic residues" evidence="3">
    <location>
        <begin position="1425"/>
        <end position="1435"/>
    </location>
</feature>
<feature type="modified residue" description="Phosphoserine" evidence="11 14">
    <location>
        <position position="379"/>
    </location>
</feature>
<feature type="modified residue" description="Phosphoserine" evidence="15">
    <location>
        <position position="401"/>
    </location>
</feature>
<feature type="modified residue" description="Phosphoserine" evidence="15">
    <location>
        <position position="416"/>
    </location>
</feature>
<feature type="modified residue" description="Phosphoserine" evidence="12 13 14 15">
    <location>
        <position position="463"/>
    </location>
</feature>
<feature type="modified residue" description="Phosphoserine" evidence="15">
    <location>
        <position position="471"/>
    </location>
</feature>
<feature type="modified residue" description="Phosphoserine" evidence="1">
    <location>
        <position position="613"/>
    </location>
</feature>
<feature type="modified residue" description="Phosphoserine" evidence="15">
    <location>
        <position position="648"/>
    </location>
</feature>
<feature type="modified residue" description="Phosphoserine" evidence="15">
    <location>
        <position position="866"/>
    </location>
</feature>
<feature type="modified residue" description="Phosphoserine" evidence="12">
    <location>
        <position position="887"/>
    </location>
</feature>
<feature type="modified residue" description="Phosphoserine" evidence="12 15">
    <location>
        <position position="889"/>
    </location>
</feature>
<feature type="modified residue" description="Phosphoserine" evidence="12">
    <location>
        <position position="891"/>
    </location>
</feature>
<feature type="modified residue" description="Phosphoserine" evidence="1">
    <location>
        <position position="907"/>
    </location>
</feature>
<feature type="modified residue" description="Phosphoserine" evidence="15">
    <location>
        <position position="1077"/>
    </location>
</feature>
<feature type="modified residue" description="Phosphoserine" evidence="13 14 15">
    <location>
        <position position="1146"/>
    </location>
</feature>
<feature type="modified residue" description="Phosphothreonine" evidence="14 15 16">
    <location>
        <position position="1155"/>
    </location>
</feature>
<feature type="modified residue" description="Phosphoserine" evidence="15">
    <location>
        <position position="1203"/>
    </location>
</feature>
<feature type="cross-link" description="Glycyl lysine isopeptide (Lys-Gly) (interchain with G-Cter in SUMO2)" evidence="18 19 20 21">
    <location>
        <position position="323"/>
    </location>
</feature>
<feature type="cross-link" description="Glycyl lysine isopeptide (Lys-Gly) (interchain with G-Cter in SUMO2)" evidence="21">
    <location>
        <position position="578"/>
    </location>
</feature>
<feature type="cross-link" description="Glycyl lysine isopeptide (Lys-Gly) (interchain with G-Cter in SUMO2)" evidence="17 18 19 21">
    <location>
        <position position="581"/>
    </location>
</feature>
<feature type="cross-link" description="Glycyl lysine isopeptide (Lys-Gly) (interchain with G-Cter in SUMO2)" evidence="21">
    <location>
        <position position="639"/>
    </location>
</feature>
<feature type="cross-link" description="Glycyl lysine isopeptide (Lys-Gly) (interchain with G-Cter in SUMO2)" evidence="21">
    <location>
        <position position="656"/>
    </location>
</feature>
<feature type="cross-link" description="Glycyl lysine isopeptide (Lys-Gly) (interchain with G-Cter in SUMO2)" evidence="19 21">
    <location>
        <position position="666"/>
    </location>
</feature>
<feature type="cross-link" description="Glycyl lysine isopeptide (Lys-Gly) (interchain with G-Cter in SUMO2)" evidence="18 20 21">
    <location>
        <position position="1057"/>
    </location>
</feature>
<feature type="cross-link" description="Glycyl lysine isopeptide (Lys-Gly) (interchain with G-Cter in SUMO2)" evidence="21">
    <location>
        <position position="1163"/>
    </location>
</feature>
<feature type="cross-link" description="Glycyl lysine isopeptide (Lys-Gly) (interchain with G-Cter in SUMO1); alternate" evidence="17">
    <location>
        <position position="1177"/>
    </location>
</feature>
<feature type="cross-link" description="Glycyl lysine isopeptide (Lys-Gly) (interchain with G-Cter in SUMO2); alternate" evidence="21">
    <location>
        <position position="1177"/>
    </location>
</feature>
<feature type="cross-link" description="Glycyl lysine isopeptide (Lys-Gly) (interchain with G-Cter in SUMO2)" evidence="21">
    <location>
        <position position="1216"/>
    </location>
</feature>
<feature type="cross-link" description="Glycyl lysine isopeptide (Lys-Gly) (interchain with G-Cter in SUMO2)" evidence="21">
    <location>
        <position position="1225"/>
    </location>
</feature>
<feature type="cross-link" description="Glycyl lysine isopeptide (Lys-Gly) (interchain with G-Cter in SUMO2)" evidence="18 20 21">
    <location>
        <position position="1258"/>
    </location>
</feature>
<feature type="sequence variant" id="VAR_061765" description="In dbSNP:rs35726114.">
    <original>V</original>
    <variation>G</variation>
    <location>
        <position position="271"/>
    </location>
</feature>
<feature type="sequence variant" id="VAR_051773" description="In dbSNP:rs33969824.">
    <original>L</original>
    <variation>V</variation>
    <location>
        <position position="861"/>
    </location>
</feature>
<feature type="sequence variant" id="VAR_051774" description="In dbSNP:rs35770315.">
    <original>S</original>
    <variation>L</variation>
    <location>
        <position position="935"/>
    </location>
</feature>
<feature type="sequence variant" id="VAR_061766" description="In dbSNP:rs34897686.">
    <original>M</original>
    <variation>T</variation>
    <location>
        <position position="1182"/>
    </location>
</feature>
<feature type="strand" evidence="22">
    <location>
        <begin position="8"/>
        <end position="15"/>
    </location>
</feature>
<feature type="strand" evidence="22">
    <location>
        <begin position="18"/>
        <end position="27"/>
    </location>
</feature>
<feature type="turn" evidence="22">
    <location>
        <begin position="29"/>
        <end position="31"/>
    </location>
</feature>
<feature type="helix" evidence="22">
    <location>
        <begin position="33"/>
        <end position="44"/>
    </location>
</feature>
<feature type="turn" evidence="22">
    <location>
        <begin position="51"/>
        <end position="53"/>
    </location>
</feature>
<feature type="strand" evidence="22">
    <location>
        <begin position="55"/>
        <end position="57"/>
    </location>
</feature>
<feature type="strand" evidence="22">
    <location>
        <begin position="63"/>
        <end position="68"/>
    </location>
</feature>
<feature type="turn" evidence="22">
    <location>
        <begin position="69"/>
        <end position="71"/>
    </location>
</feature>
<feature type="strand" evidence="22">
    <location>
        <begin position="72"/>
        <end position="75"/>
    </location>
</feature>
<feature type="turn" evidence="22">
    <location>
        <begin position="78"/>
        <end position="80"/>
    </location>
</feature>
<feature type="strand" evidence="22">
    <location>
        <begin position="81"/>
        <end position="84"/>
    </location>
</feature>
<feature type="strand" evidence="22">
    <location>
        <begin position="108"/>
        <end position="111"/>
    </location>
</feature>
<feature type="strand" evidence="22">
    <location>
        <begin position="123"/>
        <end position="128"/>
    </location>
</feature>
<feature type="helix" evidence="22">
    <location>
        <begin position="131"/>
        <end position="133"/>
    </location>
</feature>
<feature type="turn" evidence="22">
    <location>
        <begin position="134"/>
        <end position="136"/>
    </location>
</feature>
<feature type="strand" evidence="22">
    <location>
        <begin position="139"/>
        <end position="145"/>
    </location>
</feature>
<feature type="helix" evidence="22">
    <location>
        <begin position="147"/>
        <end position="154"/>
    </location>
</feature>
<feature type="strand" evidence="22">
    <location>
        <begin position="164"/>
        <end position="166"/>
    </location>
</feature>
<feature type="strand" evidence="22">
    <location>
        <begin position="168"/>
        <end position="175"/>
    </location>
</feature>
<protein>
    <recommendedName>
        <fullName evidence="8">NK-tumor recognition protein</fullName>
        <shortName evidence="6">NK-TR protein</shortName>
    </recommendedName>
    <alternativeName>
        <fullName>Natural-killer cells cyclophilin-related protein</fullName>
    </alternativeName>
    <alternativeName>
        <fullName evidence="7">Peptidyl-prolyl cis-trans isomerase NKTR</fullName>
        <shortName evidence="7">PPIase</shortName>
        <ecNumber evidence="4">5.2.1.8</ecNumber>
    </alternativeName>
    <alternativeName>
        <fullName>Rotamase</fullName>
    </alternativeName>
</protein>
<evidence type="ECO:0000250" key="1">
    <source>
        <dbReference type="UniProtKB" id="P30415"/>
    </source>
</evidence>
<evidence type="ECO:0000255" key="2">
    <source>
        <dbReference type="PROSITE-ProRule" id="PRU00156"/>
    </source>
</evidence>
<evidence type="ECO:0000256" key="3">
    <source>
        <dbReference type="SAM" id="MobiDB-lite"/>
    </source>
</evidence>
<evidence type="ECO:0000269" key="4">
    <source>
    </source>
</evidence>
<evidence type="ECO:0000269" key="5">
    <source>
    </source>
</evidence>
<evidence type="ECO:0000303" key="6">
    <source>
    </source>
</evidence>
<evidence type="ECO:0000305" key="7">
    <source>
    </source>
</evidence>
<evidence type="ECO:0000305" key="8">
    <source>
    </source>
</evidence>
<evidence type="ECO:0000312" key="9">
    <source>
        <dbReference type="HGNC" id="HGNC:7833"/>
    </source>
</evidence>
<evidence type="ECO:0007744" key="10">
    <source>
        <dbReference type="PDB" id="2HE9"/>
    </source>
</evidence>
<evidence type="ECO:0007744" key="11">
    <source>
    </source>
</evidence>
<evidence type="ECO:0007744" key="12">
    <source>
    </source>
</evidence>
<evidence type="ECO:0007744" key="13">
    <source>
    </source>
</evidence>
<evidence type="ECO:0007744" key="14">
    <source>
    </source>
</evidence>
<evidence type="ECO:0007744" key="15">
    <source>
    </source>
</evidence>
<evidence type="ECO:0007744" key="16">
    <source>
    </source>
</evidence>
<evidence type="ECO:0007744" key="17">
    <source>
    </source>
</evidence>
<evidence type="ECO:0007744" key="18">
    <source>
    </source>
</evidence>
<evidence type="ECO:0007744" key="19">
    <source>
    </source>
</evidence>
<evidence type="ECO:0007744" key="20">
    <source>
    </source>
</evidence>
<evidence type="ECO:0007744" key="21">
    <source>
    </source>
</evidence>
<evidence type="ECO:0007829" key="22">
    <source>
        <dbReference type="PDB" id="2HE9"/>
    </source>
</evidence>
<accession>P30414</accession>
<comment type="function">
    <text evidence="4 5">PPIase that catalyzes the cis-trans isomerization of proline imidic peptide bonds in oligopeptides and may therefore assist protein folding (PubMed:20676357). Component of a putative tumor-recognition complex involved in the function of NK cells (PubMed:8421688).</text>
</comment>
<comment type="catalytic activity">
    <reaction evidence="4">
        <text>[protein]-peptidylproline (omega=180) = [protein]-peptidylproline (omega=0)</text>
        <dbReference type="Rhea" id="RHEA:16237"/>
        <dbReference type="Rhea" id="RHEA-COMP:10747"/>
        <dbReference type="Rhea" id="RHEA-COMP:10748"/>
        <dbReference type="ChEBI" id="CHEBI:83833"/>
        <dbReference type="ChEBI" id="CHEBI:83834"/>
        <dbReference type="EC" id="5.2.1.8"/>
    </reaction>
</comment>
<comment type="activity regulation">
    <text evidence="7">Inhibited by cyclosporin A (CsA).</text>
</comment>
<comment type="subcellular location">
    <subcellularLocation>
        <location evidence="5">Cell membrane</location>
    </subcellularLocation>
</comment>
<comment type="caution">
    <text evidence="8">A report has suggested that the protein is expressed at the cell surface, associated with the cell membrane via its N-terminus. However, there is no direct evidence for that localization and the properties of the protein argue against it.</text>
</comment>